<keyword id="KW-0028">Amino-acid biosynthesis</keyword>
<keyword id="KW-0963">Cytoplasm</keyword>
<keyword id="KW-0368">Histidine biosynthesis</keyword>
<keyword id="KW-0378">Hydrolase</keyword>
<keyword id="KW-0460">Magnesium</keyword>
<keyword id="KW-0479">Metal-binding</keyword>
<keyword id="KW-1185">Reference proteome</keyword>
<keyword id="KW-0862">Zinc</keyword>
<name>HIS3_PELPD</name>
<sequence>MIQIDFNKMGGLIPAIIQDYQNGEVLMVAFMDEKTLNLTLETGKTWFFSRSRNKYWMKGEESGNTQEVMEVLTDCDADTVVIKVKQNGPAACHTGNRSCFYVKWENGQWVEHSKPLFDPAQVYKK</sequence>
<evidence type="ECO:0000255" key="1">
    <source>
        <dbReference type="HAMAP-Rule" id="MF_01021"/>
    </source>
</evidence>
<organism>
    <name type="scientific">Pelobacter propionicus (strain DSM 2379 / NBRC 103807 / OttBd1)</name>
    <dbReference type="NCBI Taxonomy" id="338966"/>
    <lineage>
        <taxon>Bacteria</taxon>
        <taxon>Pseudomonadati</taxon>
        <taxon>Thermodesulfobacteriota</taxon>
        <taxon>Desulfuromonadia</taxon>
        <taxon>Desulfuromonadales</taxon>
        <taxon>Desulfuromonadaceae</taxon>
        <taxon>Pelobacter</taxon>
    </lineage>
</organism>
<dbReference type="EC" id="3.5.4.19" evidence="1"/>
<dbReference type="EMBL" id="CP000482">
    <property type="protein sequence ID" value="ABL00542.1"/>
    <property type="molecule type" value="Genomic_DNA"/>
</dbReference>
<dbReference type="SMR" id="A1AT71"/>
<dbReference type="STRING" id="338966.Ppro_2944"/>
<dbReference type="KEGG" id="ppd:Ppro_2944"/>
<dbReference type="eggNOG" id="COG0139">
    <property type="taxonomic scope" value="Bacteria"/>
</dbReference>
<dbReference type="HOGENOM" id="CLU_048577_5_0_7"/>
<dbReference type="OrthoDB" id="9795769at2"/>
<dbReference type="UniPathway" id="UPA00031">
    <property type="reaction ID" value="UER00008"/>
</dbReference>
<dbReference type="Proteomes" id="UP000006732">
    <property type="component" value="Chromosome"/>
</dbReference>
<dbReference type="GO" id="GO:0005737">
    <property type="term" value="C:cytoplasm"/>
    <property type="evidence" value="ECO:0007669"/>
    <property type="project" value="UniProtKB-SubCell"/>
</dbReference>
<dbReference type="GO" id="GO:0000287">
    <property type="term" value="F:magnesium ion binding"/>
    <property type="evidence" value="ECO:0007669"/>
    <property type="project" value="UniProtKB-UniRule"/>
</dbReference>
<dbReference type="GO" id="GO:0004635">
    <property type="term" value="F:phosphoribosyl-AMP cyclohydrolase activity"/>
    <property type="evidence" value="ECO:0007669"/>
    <property type="project" value="UniProtKB-UniRule"/>
</dbReference>
<dbReference type="GO" id="GO:0008270">
    <property type="term" value="F:zinc ion binding"/>
    <property type="evidence" value="ECO:0007669"/>
    <property type="project" value="UniProtKB-UniRule"/>
</dbReference>
<dbReference type="GO" id="GO:0000105">
    <property type="term" value="P:L-histidine biosynthetic process"/>
    <property type="evidence" value="ECO:0007669"/>
    <property type="project" value="UniProtKB-UniRule"/>
</dbReference>
<dbReference type="FunFam" id="3.10.20.810:FF:000001">
    <property type="entry name" value="Histidine biosynthesis bifunctional protein HisIE"/>
    <property type="match status" value="1"/>
</dbReference>
<dbReference type="Gene3D" id="3.10.20.810">
    <property type="entry name" value="Phosphoribosyl-AMP cyclohydrolase"/>
    <property type="match status" value="1"/>
</dbReference>
<dbReference type="HAMAP" id="MF_01021">
    <property type="entry name" value="HisI"/>
    <property type="match status" value="1"/>
</dbReference>
<dbReference type="InterPro" id="IPR026660">
    <property type="entry name" value="PRA-CH"/>
</dbReference>
<dbReference type="InterPro" id="IPR002496">
    <property type="entry name" value="PRib_AMP_CycHydrolase_dom"/>
</dbReference>
<dbReference type="InterPro" id="IPR038019">
    <property type="entry name" value="PRib_AMP_CycHydrolase_sf"/>
</dbReference>
<dbReference type="NCBIfam" id="NF000768">
    <property type="entry name" value="PRK00051.1"/>
    <property type="match status" value="1"/>
</dbReference>
<dbReference type="PANTHER" id="PTHR42945">
    <property type="entry name" value="HISTIDINE BIOSYNTHESIS BIFUNCTIONAL PROTEIN"/>
    <property type="match status" value="1"/>
</dbReference>
<dbReference type="PANTHER" id="PTHR42945:SF1">
    <property type="entry name" value="HISTIDINE BIOSYNTHESIS BIFUNCTIONAL PROTEIN HIS7"/>
    <property type="match status" value="1"/>
</dbReference>
<dbReference type="Pfam" id="PF01502">
    <property type="entry name" value="PRA-CH"/>
    <property type="match status" value="1"/>
</dbReference>
<dbReference type="SUPFAM" id="SSF141734">
    <property type="entry name" value="HisI-like"/>
    <property type="match status" value="1"/>
</dbReference>
<feature type="chain" id="PRO_1000063423" description="Phosphoribosyl-AMP cyclohydrolase">
    <location>
        <begin position="1"/>
        <end position="125"/>
    </location>
</feature>
<feature type="binding site" evidence="1">
    <location>
        <position position="74"/>
    </location>
    <ligand>
        <name>Mg(2+)</name>
        <dbReference type="ChEBI" id="CHEBI:18420"/>
    </ligand>
</feature>
<feature type="binding site" evidence="1">
    <location>
        <position position="75"/>
    </location>
    <ligand>
        <name>Zn(2+)</name>
        <dbReference type="ChEBI" id="CHEBI:29105"/>
        <note>ligand shared between dimeric partners</note>
    </ligand>
</feature>
<feature type="binding site" evidence="1">
    <location>
        <position position="76"/>
    </location>
    <ligand>
        <name>Mg(2+)</name>
        <dbReference type="ChEBI" id="CHEBI:18420"/>
    </ligand>
</feature>
<feature type="binding site" evidence="1">
    <location>
        <position position="78"/>
    </location>
    <ligand>
        <name>Mg(2+)</name>
        <dbReference type="ChEBI" id="CHEBI:18420"/>
    </ligand>
</feature>
<feature type="binding site" evidence="1">
    <location>
        <position position="92"/>
    </location>
    <ligand>
        <name>Zn(2+)</name>
        <dbReference type="ChEBI" id="CHEBI:29105"/>
        <note>ligand shared between dimeric partners</note>
    </ligand>
</feature>
<feature type="binding site" evidence="1">
    <location>
        <position position="99"/>
    </location>
    <ligand>
        <name>Zn(2+)</name>
        <dbReference type="ChEBI" id="CHEBI:29105"/>
        <note>ligand shared between dimeric partners</note>
    </ligand>
</feature>
<accession>A1AT71</accession>
<proteinExistence type="inferred from homology"/>
<protein>
    <recommendedName>
        <fullName evidence="1">Phosphoribosyl-AMP cyclohydrolase</fullName>
        <shortName evidence="1">PRA-CH</shortName>
        <ecNumber evidence="1">3.5.4.19</ecNumber>
    </recommendedName>
</protein>
<gene>
    <name evidence="1" type="primary">hisI</name>
    <name type="ordered locus">Ppro_2944</name>
</gene>
<reference key="1">
    <citation type="submission" date="2006-10" db="EMBL/GenBank/DDBJ databases">
        <title>Complete sequence of chromosome of Pelobacter propionicus DSM 2379.</title>
        <authorList>
            <consortium name="US DOE Joint Genome Institute"/>
            <person name="Copeland A."/>
            <person name="Lucas S."/>
            <person name="Lapidus A."/>
            <person name="Barry K."/>
            <person name="Detter J.C."/>
            <person name="Glavina del Rio T."/>
            <person name="Hammon N."/>
            <person name="Israni S."/>
            <person name="Dalin E."/>
            <person name="Tice H."/>
            <person name="Pitluck S."/>
            <person name="Saunders E."/>
            <person name="Brettin T."/>
            <person name="Bruce D."/>
            <person name="Han C."/>
            <person name="Tapia R."/>
            <person name="Schmutz J."/>
            <person name="Larimer F."/>
            <person name="Land M."/>
            <person name="Hauser L."/>
            <person name="Kyrpides N."/>
            <person name="Kim E."/>
            <person name="Lovley D."/>
            <person name="Richardson P."/>
        </authorList>
    </citation>
    <scope>NUCLEOTIDE SEQUENCE [LARGE SCALE GENOMIC DNA]</scope>
    <source>
        <strain>DSM 2379 / NBRC 103807 / OttBd1</strain>
    </source>
</reference>
<comment type="function">
    <text evidence="1">Catalyzes the hydrolysis of the adenine ring of phosphoribosyl-AMP.</text>
</comment>
<comment type="catalytic activity">
    <reaction evidence="1">
        <text>1-(5-phospho-beta-D-ribosyl)-5'-AMP + H2O = 1-(5-phospho-beta-D-ribosyl)-5-[(5-phospho-beta-D-ribosylamino)methylideneamino]imidazole-4-carboxamide</text>
        <dbReference type="Rhea" id="RHEA:20049"/>
        <dbReference type="ChEBI" id="CHEBI:15377"/>
        <dbReference type="ChEBI" id="CHEBI:58435"/>
        <dbReference type="ChEBI" id="CHEBI:59457"/>
        <dbReference type="EC" id="3.5.4.19"/>
    </reaction>
</comment>
<comment type="cofactor">
    <cofactor evidence="1">
        <name>Mg(2+)</name>
        <dbReference type="ChEBI" id="CHEBI:18420"/>
    </cofactor>
    <text evidence="1">Binds 1 Mg(2+) ion per subunit.</text>
</comment>
<comment type="cofactor">
    <cofactor evidence="1">
        <name>Zn(2+)</name>
        <dbReference type="ChEBI" id="CHEBI:29105"/>
    </cofactor>
    <text evidence="1">Binds 1 zinc ion per subunit.</text>
</comment>
<comment type="pathway">
    <text evidence="1">Amino-acid biosynthesis; L-histidine biosynthesis; L-histidine from 5-phospho-alpha-D-ribose 1-diphosphate: step 3/9.</text>
</comment>
<comment type="subunit">
    <text evidence="1">Homodimer.</text>
</comment>
<comment type="subcellular location">
    <subcellularLocation>
        <location evidence="1">Cytoplasm</location>
    </subcellularLocation>
</comment>
<comment type="similarity">
    <text evidence="1">Belongs to the PRA-CH family.</text>
</comment>